<proteinExistence type="evidence at transcript level"/>
<keyword id="KW-0025">Alternative splicing</keyword>
<keyword id="KW-0112">Calmodulin-binding</keyword>
<keyword id="KW-0274">FAD</keyword>
<keyword id="KW-0285">Flavoprotein</keyword>
<keyword id="KW-0288">FMN</keyword>
<keyword id="KW-0349">Heme</keyword>
<keyword id="KW-0408">Iron</keyword>
<keyword id="KW-0479">Metal-binding</keyword>
<keyword id="KW-0521">NADP</keyword>
<keyword id="KW-0560">Oxidoreductase</keyword>
<keyword id="KW-0677">Repeat</keyword>
<evidence type="ECO:0000250" key="1"/>
<evidence type="ECO:0000250" key="2">
    <source>
        <dbReference type="UniProtKB" id="P29474"/>
    </source>
</evidence>
<evidence type="ECO:0000255" key="3"/>
<evidence type="ECO:0000255" key="4">
    <source>
        <dbReference type="PROSITE-ProRule" id="PRU00088"/>
    </source>
</evidence>
<evidence type="ECO:0000255" key="5">
    <source>
        <dbReference type="PROSITE-ProRule" id="PRU00716"/>
    </source>
</evidence>
<evidence type="ECO:0000303" key="6">
    <source>
    </source>
</evidence>
<evidence type="ECO:0000305" key="7"/>
<reference key="1">
    <citation type="journal article" date="1998" name="J. Neurobiol.">
        <title>Molecular characterization of NOS in a mollusc: expression in a giant modulatory neuron.</title>
        <authorList>
            <person name="Korneev S.A."/>
            <person name="Piper M.R."/>
            <person name="Picot J."/>
            <person name="Phillips R."/>
            <person name="Korneeva E.I."/>
            <person name="O'Shea M."/>
        </authorList>
    </citation>
    <scope>NUCLEOTIDE SEQUENCE [MRNA] (ISOFORMS LONG AND SHORT)</scope>
    <source>
        <tissue>CNS</tissue>
    </source>
</reference>
<dbReference type="EC" id="1.14.13.39"/>
<dbReference type="EMBL" id="AF012531">
    <property type="protein sequence ID" value="AAC17487.1"/>
    <property type="molecule type" value="mRNA"/>
</dbReference>
<dbReference type="PIR" id="T31080">
    <property type="entry name" value="T31080"/>
</dbReference>
<dbReference type="SMR" id="O61309"/>
<dbReference type="BRENDA" id="1.14.13.39">
    <property type="organism ID" value="3112"/>
</dbReference>
<dbReference type="GO" id="GO:0005516">
    <property type="term" value="F:calmodulin binding"/>
    <property type="evidence" value="ECO:0007669"/>
    <property type="project" value="UniProtKB-KW"/>
</dbReference>
<dbReference type="GO" id="GO:0050660">
    <property type="term" value="F:flavin adenine dinucleotide binding"/>
    <property type="evidence" value="ECO:0007669"/>
    <property type="project" value="InterPro"/>
</dbReference>
<dbReference type="GO" id="GO:0010181">
    <property type="term" value="F:FMN binding"/>
    <property type="evidence" value="ECO:0007669"/>
    <property type="project" value="InterPro"/>
</dbReference>
<dbReference type="GO" id="GO:0020037">
    <property type="term" value="F:heme binding"/>
    <property type="evidence" value="ECO:0007669"/>
    <property type="project" value="InterPro"/>
</dbReference>
<dbReference type="GO" id="GO:0046872">
    <property type="term" value="F:metal ion binding"/>
    <property type="evidence" value="ECO:0007669"/>
    <property type="project" value="UniProtKB-KW"/>
</dbReference>
<dbReference type="GO" id="GO:0050661">
    <property type="term" value="F:NADP binding"/>
    <property type="evidence" value="ECO:0007669"/>
    <property type="project" value="InterPro"/>
</dbReference>
<dbReference type="GO" id="GO:0004517">
    <property type="term" value="F:nitric-oxide synthase activity"/>
    <property type="evidence" value="ECO:0007669"/>
    <property type="project" value="UniProtKB-EC"/>
</dbReference>
<dbReference type="GO" id="GO:0006809">
    <property type="term" value="P:nitric oxide biosynthetic process"/>
    <property type="evidence" value="ECO:0007669"/>
    <property type="project" value="InterPro"/>
</dbReference>
<dbReference type="FunFam" id="3.90.440.10:FF:000001">
    <property type="entry name" value="Endothelial nitric oxide synthase"/>
    <property type="match status" value="1"/>
</dbReference>
<dbReference type="FunFam" id="1.20.990.10:FF:000002">
    <property type="entry name" value="Nitric oxide synthase"/>
    <property type="match status" value="1"/>
</dbReference>
<dbReference type="Gene3D" id="3.40.50.360">
    <property type="match status" value="1"/>
</dbReference>
<dbReference type="Gene3D" id="1.20.990.10">
    <property type="entry name" value="NADPH-cytochrome p450 Reductase, Chain A, domain 3"/>
    <property type="match status" value="1"/>
</dbReference>
<dbReference type="Gene3D" id="3.90.340.10">
    <property type="entry name" value="Nitric Oxide Synthase, Chain A, domain 1"/>
    <property type="match status" value="1"/>
</dbReference>
<dbReference type="Gene3D" id="3.90.1230.10">
    <property type="entry name" value="Nitric Oxide Synthase, Chain A, domain 3"/>
    <property type="match status" value="1"/>
</dbReference>
<dbReference type="Gene3D" id="3.90.440.10">
    <property type="entry name" value="Nitric Oxide Synthase,Heme Domain,Chain A domain 2"/>
    <property type="match status" value="1"/>
</dbReference>
<dbReference type="Gene3D" id="3.40.50.80">
    <property type="entry name" value="Nucleotide-binding domain of ferredoxin-NADP reductase (FNR) module"/>
    <property type="match status" value="1"/>
</dbReference>
<dbReference type="Gene3D" id="2.40.30.10">
    <property type="entry name" value="Translation factors"/>
    <property type="match status" value="1"/>
</dbReference>
<dbReference type="InterPro" id="IPR003097">
    <property type="entry name" value="CysJ-like_FAD-binding"/>
</dbReference>
<dbReference type="InterPro" id="IPR017927">
    <property type="entry name" value="FAD-bd_FR_type"/>
</dbReference>
<dbReference type="InterPro" id="IPR001094">
    <property type="entry name" value="Flavdoxin-like"/>
</dbReference>
<dbReference type="InterPro" id="IPR008254">
    <property type="entry name" value="Flavodoxin/NO_synth"/>
</dbReference>
<dbReference type="InterPro" id="IPR001709">
    <property type="entry name" value="Flavoprot_Pyr_Nucl_cyt_Rdtase"/>
</dbReference>
<dbReference type="InterPro" id="IPR029039">
    <property type="entry name" value="Flavoprotein-like_sf"/>
</dbReference>
<dbReference type="InterPro" id="IPR039261">
    <property type="entry name" value="FNR_nucleotide-bd"/>
</dbReference>
<dbReference type="InterPro" id="IPR023173">
    <property type="entry name" value="NADPH_Cyt_P450_Rdtase_alpha"/>
</dbReference>
<dbReference type="InterPro" id="IPR050607">
    <property type="entry name" value="NOS"/>
</dbReference>
<dbReference type="InterPro" id="IPR044943">
    <property type="entry name" value="NOS_dom_1"/>
</dbReference>
<dbReference type="InterPro" id="IPR044940">
    <property type="entry name" value="NOS_dom_2"/>
</dbReference>
<dbReference type="InterPro" id="IPR044944">
    <property type="entry name" value="NOS_dom_3"/>
</dbReference>
<dbReference type="InterPro" id="IPR012144">
    <property type="entry name" value="NOS_euk"/>
</dbReference>
<dbReference type="InterPro" id="IPR004030">
    <property type="entry name" value="NOS_N"/>
</dbReference>
<dbReference type="InterPro" id="IPR036119">
    <property type="entry name" value="NOS_N_sf"/>
</dbReference>
<dbReference type="InterPro" id="IPR001433">
    <property type="entry name" value="OxRdtase_FAD/NAD-bd"/>
</dbReference>
<dbReference type="InterPro" id="IPR017938">
    <property type="entry name" value="Riboflavin_synthase-like_b-brl"/>
</dbReference>
<dbReference type="PANTHER" id="PTHR43410:SF1">
    <property type="entry name" value="NITRIC OXIDE SYNTHASE"/>
    <property type="match status" value="1"/>
</dbReference>
<dbReference type="PANTHER" id="PTHR43410">
    <property type="entry name" value="NITRIC OXIDE SYNTHASE OXYGENASE"/>
    <property type="match status" value="1"/>
</dbReference>
<dbReference type="Pfam" id="PF00667">
    <property type="entry name" value="FAD_binding_1"/>
    <property type="match status" value="1"/>
</dbReference>
<dbReference type="Pfam" id="PF00258">
    <property type="entry name" value="Flavodoxin_1"/>
    <property type="match status" value="1"/>
</dbReference>
<dbReference type="Pfam" id="PF00175">
    <property type="entry name" value="NAD_binding_1"/>
    <property type="match status" value="1"/>
</dbReference>
<dbReference type="Pfam" id="PF02898">
    <property type="entry name" value="NO_synthase"/>
    <property type="match status" value="1"/>
</dbReference>
<dbReference type="PIRSF" id="PIRSF000333">
    <property type="entry name" value="NOS"/>
    <property type="match status" value="1"/>
</dbReference>
<dbReference type="PRINTS" id="PR00369">
    <property type="entry name" value="FLAVODOXIN"/>
</dbReference>
<dbReference type="PRINTS" id="PR00371">
    <property type="entry name" value="FPNCR"/>
</dbReference>
<dbReference type="SUPFAM" id="SSF52343">
    <property type="entry name" value="Ferredoxin reductase-like, C-terminal NADP-linked domain"/>
    <property type="match status" value="2"/>
</dbReference>
<dbReference type="SUPFAM" id="SSF52218">
    <property type="entry name" value="Flavoproteins"/>
    <property type="match status" value="1"/>
</dbReference>
<dbReference type="SUPFAM" id="SSF56512">
    <property type="entry name" value="Nitric oxide (NO) synthase oxygenase domain"/>
    <property type="match status" value="1"/>
</dbReference>
<dbReference type="SUPFAM" id="SSF63380">
    <property type="entry name" value="Riboflavin synthase domain-like"/>
    <property type="match status" value="1"/>
</dbReference>
<dbReference type="PROSITE" id="PS51384">
    <property type="entry name" value="FAD_FR"/>
    <property type="match status" value="1"/>
</dbReference>
<dbReference type="PROSITE" id="PS50902">
    <property type="entry name" value="FLAVODOXIN_LIKE"/>
    <property type="match status" value="1"/>
</dbReference>
<dbReference type="PROSITE" id="PS60001">
    <property type="entry name" value="NOS"/>
    <property type="match status" value="1"/>
</dbReference>
<gene>
    <name type="primary">NOS</name>
</gene>
<organism>
    <name type="scientific">Lymnaea stagnalis</name>
    <name type="common">Great pond snail</name>
    <name type="synonym">Helix stagnalis</name>
    <dbReference type="NCBI Taxonomy" id="6523"/>
    <lineage>
        <taxon>Eukaryota</taxon>
        <taxon>Metazoa</taxon>
        <taxon>Spiralia</taxon>
        <taxon>Lophotrochozoa</taxon>
        <taxon>Mollusca</taxon>
        <taxon>Gastropoda</taxon>
        <taxon>Heterobranchia</taxon>
        <taxon>Euthyneura</taxon>
        <taxon>Panpulmonata</taxon>
        <taxon>Hygrophila</taxon>
        <taxon>Lymnaeoidea</taxon>
        <taxon>Lymnaeidae</taxon>
        <taxon>Lymnaea</taxon>
    </lineage>
</organism>
<comment type="function">
    <text evidence="1">Produces nitric oxide (NO) which is a messenger molecule with diverse functions throughout the body.</text>
</comment>
<comment type="catalytic activity">
    <reaction>
        <text>2 L-arginine + 3 NADPH + 4 O2 + H(+) = 2 L-citrulline + 2 nitric oxide + 3 NADP(+) + 4 H2O</text>
        <dbReference type="Rhea" id="RHEA:19897"/>
        <dbReference type="ChEBI" id="CHEBI:15377"/>
        <dbReference type="ChEBI" id="CHEBI:15378"/>
        <dbReference type="ChEBI" id="CHEBI:15379"/>
        <dbReference type="ChEBI" id="CHEBI:16480"/>
        <dbReference type="ChEBI" id="CHEBI:32682"/>
        <dbReference type="ChEBI" id="CHEBI:57743"/>
        <dbReference type="ChEBI" id="CHEBI:57783"/>
        <dbReference type="ChEBI" id="CHEBI:58349"/>
        <dbReference type="EC" id="1.14.13.39"/>
    </reaction>
</comment>
<comment type="cofactor">
    <cofactor evidence="1">
        <name>heme b</name>
        <dbReference type="ChEBI" id="CHEBI:60344"/>
    </cofactor>
</comment>
<comment type="cofactor">
    <cofactor evidence="1">
        <name>FAD</name>
        <dbReference type="ChEBI" id="CHEBI:57692"/>
    </cofactor>
    <text evidence="1">Binds 1 FAD.</text>
</comment>
<comment type="cofactor">
    <cofactor evidence="1">
        <name>FMN</name>
        <dbReference type="ChEBI" id="CHEBI:58210"/>
    </cofactor>
    <text evidence="1">Binds 1 FMN.</text>
</comment>
<comment type="activity regulation">
    <text>Stimulated by calcium/calmodulin.</text>
</comment>
<comment type="alternative products">
    <event type="alternative splicing"/>
    <isoform>
        <id>O61309-1</id>
        <name>Long</name>
        <sequence type="displayed"/>
    </isoform>
    <isoform>
        <id>O61309-2</id>
        <name>Short</name>
        <sequence type="described" ref="VSP_003584"/>
    </isoform>
</comment>
<comment type="tissue specificity">
    <text>Expressed in the central nervous system, in the serotonergic cerebral giant cells. The isoform Long and isoform Short are expressed equally in the CNS.</text>
</comment>
<comment type="similarity">
    <text evidence="7">Belongs to the NOS family.</text>
</comment>
<sequence>MGSLSQQAHGPPDAPRSKEELLIHAKDFINQYFTSFQMNKTRAHFHRLGEINDLIEKSGTYDLTMAELTFGAKHAWRNAPGCIGRSQWSKLQVFDAREIGTPREMFEALCSHIRYATNEGKIRSTITIFPQRKEGRPDFRVWNTQLISYAGYKLGDGKVIGDPANVEFTEMCVEMGWKPKHGMFDLLPLVLSAAENSPEYFELPTELVLEVTLKHPEYPWFAEMGLKWYALPTDSGMLLDCGGLEFPSCPFNGWFMGTMIGSRNLCDPHRYNMLEPIGLKMGLNTETASSLWKDRVLIEVNVAVLYSFESANVTIVNHHDASTDFISHMDKEIKLRGGCPSDWVRMVPPMSGSTLEVFHQEMLLYNLHPAFVRQDVKPWKKHVWKSDQSVPINSCNPKRKLGFKALARAVEFSASLMSKALSSRVKCSIFYATETGRSERFARRLSEIFKPVFHSRVVCMDDYAVETLEHESLVMVITSTFGNGEPPENGKQFAQSLLDMKRKYDCDLGFLESCSSISTCIKSSILTEGPLAADVIGDRQSLAMGTGPLCNVRFAVFGLGSKAYPYYAAYGKYIYLMLQELGAERLVNYCAGDALYGQEQSFRAWSEEVFKASCEAFCLDNRNDAPGPQTKGDCSKVRIVPVENCQEPDLCQVLRNIHGKEVMPLILAERIQLQAKDSDQQTILIKLDAHNATDLKYAPGDHVAIFPANSPEIVDAILVRLDTSKGPSPDQVVKTEISTQLGTNDTWRSHLPICTSRTAFSFLLDVTTPPSQEILQVLATQASSDMDKHKLEQLASNSEAYEKWRLDLSPNILEILDEFPSLKIPPSLLLTQLPLLQPRYYSISSSQQKNPNEVHATIAVVRFKTQDGDGPVHEGVCSSWLNRSPIGTVVPCFLRSAPHFHLPEDPSLPIIMIGPGSGIAPFRSFWQQRLGEIENTMPSCENTMLSCETTIPSCENSMPSCENTMPSCENTMPSCENTIPSCENTIPSCENTMPSCENTIPSWERTMQPCQIILPSQTKKHFGEMVLYTGCRTAKHMIYAAELEEMKRLGVLSNYHVALSREAALPKMYVQDIIIKNAAAVYEIVMKKGGHFYVSGDVSMAHDVTRALELVLCQQGGREASQQVMSLRDENLFHEDIFGSFVRKAGGQRSEDE</sequence>
<feature type="chain" id="PRO_0000170949" description="Nitric oxide synthase">
    <location>
        <begin position="1"/>
        <end position="1153"/>
    </location>
</feature>
<feature type="domain" description="Flavodoxin-like" evidence="4">
    <location>
        <begin position="427"/>
        <end position="610"/>
    </location>
</feature>
<feature type="domain" description="FAD-binding FR-type" evidence="5">
    <location>
        <begin position="660"/>
        <end position="903"/>
    </location>
</feature>
<feature type="repeat" description="1">
    <location>
        <begin position="934"/>
        <end position="940"/>
    </location>
</feature>
<feature type="repeat" description="2">
    <location>
        <begin position="941"/>
        <end position="947"/>
    </location>
</feature>
<feature type="repeat" description="3">
    <location>
        <begin position="948"/>
        <end position="954"/>
    </location>
</feature>
<feature type="repeat" description="4">
    <location>
        <begin position="955"/>
        <end position="961"/>
    </location>
</feature>
<feature type="repeat" description="5">
    <location>
        <begin position="962"/>
        <end position="968"/>
    </location>
</feature>
<feature type="repeat" description="6">
    <location>
        <begin position="969"/>
        <end position="975"/>
    </location>
</feature>
<feature type="repeat" description="7">
    <location>
        <begin position="976"/>
        <end position="982"/>
    </location>
</feature>
<feature type="repeat" description="8">
    <location>
        <begin position="983"/>
        <end position="989"/>
    </location>
</feature>
<feature type="repeat" description="9">
    <location>
        <begin position="990"/>
        <end position="996"/>
    </location>
</feature>
<feature type="repeat" description="10">
    <location>
        <begin position="997"/>
        <end position="1003"/>
    </location>
</feature>
<feature type="repeat" description="11">
    <location>
        <begin position="1004"/>
        <end position="1010"/>
    </location>
</feature>
<feature type="region of interest" description="Calmodulin-binding" evidence="3">
    <location>
        <begin position="397"/>
        <end position="417"/>
    </location>
</feature>
<feature type="region of interest" description="11 X 7 AA tandem repeats of E-[NTR]-[ST]-[IM]-[PLQ]-[SP]-[CW]">
    <location>
        <begin position="934"/>
        <end position="1010"/>
    </location>
</feature>
<feature type="binding site" evidence="2">
    <location>
        <position position="3"/>
    </location>
    <ligand>
        <name>(6R)-L-erythro-5,6,7,8-tetrahydrobiopterin</name>
        <dbReference type="ChEBI" id="CHEBI:59560"/>
    </ligand>
</feature>
<feature type="binding site" description="axial binding residue" evidence="2">
    <location>
        <position position="82"/>
    </location>
    <ligand>
        <name>heme b</name>
        <dbReference type="ChEBI" id="CHEBI:60344"/>
    </ligand>
    <ligandPart>
        <name>Fe</name>
        <dbReference type="ChEBI" id="CHEBI:18248"/>
    </ligandPart>
</feature>
<feature type="binding site" evidence="2">
    <location>
        <position position="145"/>
    </location>
    <ligand>
        <name>L-arginine</name>
        <dbReference type="ChEBI" id="CHEBI:32682"/>
    </ligand>
</feature>
<feature type="binding site" evidence="2">
    <location>
        <position position="254"/>
    </location>
    <ligand>
        <name>L-arginine</name>
        <dbReference type="ChEBI" id="CHEBI:32682"/>
    </ligand>
</feature>
<feature type="binding site" evidence="2">
    <location>
        <position position="264"/>
    </location>
    <ligand>
        <name>L-arginine</name>
        <dbReference type="ChEBI" id="CHEBI:32682"/>
    </ligand>
</feature>
<feature type="binding site" evidence="2">
    <location>
        <position position="358"/>
    </location>
    <ligand>
        <name>(6R)-L-erythro-5,6,7,8-tetrahydrobiopterin</name>
        <dbReference type="ChEBI" id="CHEBI:59560"/>
    </ligand>
</feature>
<feature type="binding site" evidence="4">
    <location>
        <begin position="556"/>
        <end position="587"/>
    </location>
    <ligand>
        <name>FMN</name>
        <dbReference type="ChEBI" id="CHEBI:58210"/>
    </ligand>
</feature>
<feature type="binding site" evidence="1">
    <location>
        <begin position="697"/>
        <end position="708"/>
    </location>
    <ligand>
        <name>FAD</name>
        <dbReference type="ChEBI" id="CHEBI:57692"/>
    </ligand>
</feature>
<feature type="binding site" evidence="1">
    <location>
        <begin position="836"/>
        <end position="846"/>
    </location>
    <ligand>
        <name>FAD</name>
        <dbReference type="ChEBI" id="CHEBI:57692"/>
    </ligand>
</feature>
<feature type="binding site" evidence="1">
    <location>
        <begin position="911"/>
        <end position="929"/>
    </location>
    <ligand>
        <name>NADP(+)</name>
        <dbReference type="ChEBI" id="CHEBI:58349"/>
    </ligand>
</feature>
<feature type="binding site" evidence="1">
    <location>
        <begin position="1089"/>
        <end position="1104"/>
    </location>
    <ligand>
        <name>NADP(+)</name>
        <dbReference type="ChEBI" id="CHEBI:58349"/>
    </ligand>
</feature>
<feature type="splice variant" id="VSP_003584" description="In isoform Short." evidence="6">
    <location>
        <begin position="276"/>
        <end position="309"/>
    </location>
</feature>
<accession>O61309</accession>
<protein>
    <recommendedName>
        <fullName>Nitric oxide synthase</fullName>
        <ecNumber>1.14.13.39</ecNumber>
    </recommendedName>
    <alternativeName>
        <fullName>NOS type I</fullName>
    </alternativeName>
    <alternativeName>
        <fullName>Neuronal NOS</fullName>
        <shortName>N-NOS</shortName>
        <shortName>nNOS</shortName>
    </alternativeName>
</protein>
<name>NOS_LYMST</name>